<organism>
    <name type="scientific">Entamoeba histolytica (strain ATCC 30459 / HM-1:IMSS / ABRM)</name>
    <dbReference type="NCBI Taxonomy" id="294381"/>
    <lineage>
        <taxon>Eukaryota</taxon>
        <taxon>Amoebozoa</taxon>
        <taxon>Evosea</taxon>
        <taxon>Archamoebae</taxon>
        <taxon>Mastigamoebida</taxon>
        <taxon>Entamoebidae</taxon>
        <taxon>Entamoeba</taxon>
    </lineage>
</organism>
<comment type="function">
    <text evidence="1">Inorganic pyrophosphate (PPi)-dependent phosphoenolpyruvate carboxykinase, which regulates the carbon flow of the central metabolism by fixing CO(2) to phosphoenolpyruvate to produce oxaloacetate. Can also produce pyruvate and diphosphate from phosphoenolpyruvate and phosphate.</text>
</comment>
<comment type="catalytic activity">
    <reaction evidence="1">
        <text>oxaloacetate + diphosphate = phosphoenolpyruvate + phosphate + CO2</text>
        <dbReference type="Rhea" id="RHEA:22356"/>
        <dbReference type="ChEBI" id="CHEBI:16452"/>
        <dbReference type="ChEBI" id="CHEBI:16526"/>
        <dbReference type="ChEBI" id="CHEBI:33019"/>
        <dbReference type="ChEBI" id="CHEBI:43474"/>
        <dbReference type="ChEBI" id="CHEBI:58702"/>
        <dbReference type="EC" id="4.1.1.38"/>
    </reaction>
</comment>
<comment type="subunit">
    <text evidence="3">Monomer and trimer; forms heterotrimers with PEPCK1 and PEPCK2.</text>
</comment>
<comment type="subcellular location">
    <subcellularLocation>
        <location evidence="1">Cytoplasm</location>
        <location evidence="1">Cytosol</location>
    </subcellularLocation>
</comment>
<comment type="similarity">
    <text evidence="5">Belongs to the PPi-type phosphoenolpyruvate carboxykinase family.</text>
</comment>
<evidence type="ECO:0000250" key="1">
    <source>
        <dbReference type="UniProtKB" id="C4LY96"/>
    </source>
</evidence>
<evidence type="ECO:0000255" key="2"/>
<evidence type="ECO:0000269" key="3">
    <source>
    </source>
</evidence>
<evidence type="ECO:0000303" key="4">
    <source>
    </source>
</evidence>
<evidence type="ECO:0000305" key="5"/>
<evidence type="ECO:0000312" key="6">
    <source>
        <dbReference type="EMBL" id="EAL49814.2"/>
    </source>
</evidence>
<protein>
    <recommendedName>
        <fullName evidence="4">PPi-type phosphoenolpyruvate carboxykinase 3</fullName>
        <shortName evidence="4">EhPEPCK3</shortName>
        <shortName evidence="4">PPi-PEPCK3</shortName>
        <ecNumber evidence="1">4.1.1.38</ecNumber>
    </recommendedName>
    <alternativeName>
        <fullName evidence="5">Diphosphate-dependent phosphoenolpyruvate carboxykinase 3</fullName>
    </alternativeName>
    <alternativeName>
        <fullName evidence="5">PEP carboxyphosphotransferase 3</fullName>
    </alternativeName>
</protein>
<sequence length="1153" mass="131013">MFNQEQGTDYPVLNKKKLESLANLKLAMGGHEYPTDDLTQQGLKLAGPLLEEVEESEVNHTTAPIDARLQTFLNSYFAECGEEVPKIPDDTFILDREGLGRVLSFPPHKQEFFCETMKSYKIKQGVLHNPAKDKRTTVGVFHICQSDVPVPADKIECPKIAFLRMLKAAFYGAPDDHLIIPYTAECKEPTRSWVSLYMRPVVVPGVKGVKGFEHEKATEMHFFVPGNMVSCLDFVESVFGNAGNPRLSKNDAALDPLGWTGHSGMAILAPHLTRMTKKECGLPHISQATERQKRERMCWEKEDELYNDGKTFKMYCRDASGVICTIIADNYFGYCKKEVKTQISYSANLYGFAEEEHAGGAIARPSYDLGESCDASKYAEGYKFSEMVEKNKHSIIVKEEGYAVDKKYPEGIIYVPEDSVFTIEDASIKFNHNGKEESILLTPKVNYVLPNGYTIILHDTMTSRRWTLRGILPQYTLCHKPCTVSGGGKSEISKSIRDAVIEGSVFVNNKEEDFKAVQKVFDHDFSKRYANGEVKPIHILDPNVTLGTVVELLTPSHLFTKEHNDYISSISPLIVELVMTIKSLYREDWKGDWQSRITVDKINGNEGNELKYRGANLSSQYLRVGFERDETTWRVFQLRKDFFPAAKLQMEDDITASVIVPTKLLKTPINNMQKKACKIVKNCELRLFQRPDDAVFRGFDKQTEYDFSIPGHFISNYQPMTREEAKDFTKDVVRLYQYTEPMRKCLQDFVAGKDEAKYIVSSSYTRLVPEGDKLVGSKNPRYLQRRPDMLDPEYTYMTFKAIQLYRKISDEEPLYTPVDAVLSGRRNNPPQVAKNGMKLRPLSVFAPLHYFELPELLMECITSMTGASPSMFGAGSEGALTKGPFNSLPAVVDLNNYLLGMICCGYSGFVSSASYCGPHYKVAHDISLLIPEIWSKMIRYEQEPKYLIEHGYLEPCPDVTYNGKTYSGKRLGYRITTAFANHFLRTLFSMPNSVMPEDFLKPELQDLAIYADSYEYMSQTDKGIAMNYVKDGTVEGACPPLKALIYIMANGEYNGMTRESKEFREMFDPEVVLNSEWYKERLVTRQKLEVAKLNKDLAYLNKTIAEKPRLAETLNKQIAAVKEELQYVSSEEYLHDINGSIGTDPYPYKCMKH</sequence>
<accession>C4LWQ8</accession>
<reference key="1">
    <citation type="journal article" date="2005" name="Nature">
        <title>The genome of the protist parasite Entamoeba histolytica.</title>
        <authorList>
            <person name="Loftus B.J."/>
            <person name="Anderson I."/>
            <person name="Davies R."/>
            <person name="Alsmark U.C."/>
            <person name="Samuelson J."/>
            <person name="Amedeo P."/>
            <person name="Roncaglia P."/>
            <person name="Berriman M."/>
            <person name="Hirt R.P."/>
            <person name="Mann B.J."/>
            <person name="Nozaki T."/>
            <person name="Suh B."/>
            <person name="Pop M."/>
            <person name="Duchene M."/>
            <person name="Ackers J."/>
            <person name="Tannich E."/>
            <person name="Leippe M."/>
            <person name="Hofer M."/>
            <person name="Bruchhaus I."/>
            <person name="Willhoeft U."/>
            <person name="Bhattacharya A."/>
            <person name="Chillingworth T."/>
            <person name="Churcher C.M."/>
            <person name="Hance Z."/>
            <person name="Harris B."/>
            <person name="Harris D."/>
            <person name="Jagels K."/>
            <person name="Moule S."/>
            <person name="Mungall K.L."/>
            <person name="Ormond D."/>
            <person name="Squares R."/>
            <person name="Whitehead S."/>
            <person name="Quail M.A."/>
            <person name="Rabbinowitsch E."/>
            <person name="Norbertczak H."/>
            <person name="Price C."/>
            <person name="Wang Z."/>
            <person name="Guillen N."/>
            <person name="Gilchrist C."/>
            <person name="Stroup S.E."/>
            <person name="Bhattacharya S."/>
            <person name="Lohia A."/>
            <person name="Foster P.G."/>
            <person name="Sicheritz-Ponten T."/>
            <person name="Weber C."/>
            <person name="Singh U."/>
            <person name="Mukherjee C."/>
            <person name="El-Sayed N.M.A."/>
            <person name="Petri W.A."/>
            <person name="Clark C.G."/>
            <person name="Embley T.M."/>
            <person name="Barrell B.G."/>
            <person name="Fraser C.M."/>
            <person name="Hall N."/>
        </authorList>
    </citation>
    <scope>NUCLEOTIDE SEQUENCE [LARGE SCALE GENOMIC DNA]</scope>
    <source>
        <strain>ATCC 30459 / HM-1:IMSS / ABRM</strain>
    </source>
</reference>
<reference key="2">
    <citation type="journal article" date="2010" name="PLoS Negl. Trop. Dis.">
        <title>New assembly, reannotation and analysis of the Entamoeba histolytica genome reveal new genomic features and protein content information.</title>
        <authorList>
            <person name="Lorenzi H.A."/>
            <person name="Puiu D."/>
            <person name="Miller J.R."/>
            <person name="Brinkac L.M."/>
            <person name="Amedeo P."/>
            <person name="Hall N."/>
            <person name="Caler E.V."/>
        </authorList>
    </citation>
    <scope>GENOME REANNOTATION</scope>
    <source>
        <strain>ATCC 30459 / HM-1:IMSS / ABRM</strain>
    </source>
</reference>
<reference key="3">
    <citation type="journal article" date="2015" name="J. Biol. Chem.">
        <title>Discovery of PPi-type phosphoenolpyruvate carboxykinase genes in eukaryotes and bacteria.</title>
        <authorList>
            <person name="Chiba Y."/>
            <person name="Kamikawa R."/>
            <person name="Nakada-Tsukui K."/>
            <person name="Saito-Nakano Y."/>
            <person name="Nozaki T."/>
        </authorList>
    </citation>
    <scope>IDENTIFICATION BY MASS SPECTROMETRY</scope>
    <scope>SUBUNIT</scope>
</reference>
<keyword id="KW-0175">Coiled coil</keyword>
<keyword id="KW-0963">Cytoplasm</keyword>
<keyword id="KW-0210">Decarboxylase</keyword>
<keyword id="KW-0456">Lyase</keyword>
<keyword id="KW-1185">Reference proteome</keyword>
<gene>
    <name evidence="5" type="primary">PEPCK3</name>
    <name evidence="6" type="ORF">EHI_198620</name>
</gene>
<proteinExistence type="evidence at protein level"/>
<name>PECK3_ENTH1</name>
<feature type="chain" id="PRO_0000434732" description="PPi-type phosphoenolpyruvate carboxykinase 3">
    <location>
        <begin position="1"/>
        <end position="1153"/>
    </location>
</feature>
<feature type="coiled-coil region" evidence="2">
    <location>
        <begin position="1085"/>
        <end position="1131"/>
    </location>
</feature>
<dbReference type="EC" id="4.1.1.38" evidence="1"/>
<dbReference type="EMBL" id="DS571165">
    <property type="protein sequence ID" value="EAL49814.2"/>
    <property type="molecule type" value="Genomic_DNA"/>
</dbReference>
<dbReference type="RefSeq" id="XP_655201.2">
    <property type="nucleotide sequence ID" value="XM_650109.2"/>
</dbReference>
<dbReference type="SMR" id="C4LWQ8"/>
<dbReference type="STRING" id="5759.C4LWQ8"/>
<dbReference type="EnsemblProtists" id="rna_EHI_198620-1">
    <property type="protein sequence ID" value="rna_EHI_198620-1"/>
    <property type="gene ID" value="EHI_198620"/>
</dbReference>
<dbReference type="GeneID" id="3409516"/>
<dbReference type="KEGG" id="ehi:EHI_198620"/>
<dbReference type="VEuPathDB" id="AmoebaDB:EHI5A_126350"/>
<dbReference type="VEuPathDB" id="AmoebaDB:EHI5A_194890"/>
<dbReference type="VEuPathDB" id="AmoebaDB:EHI5A_252600"/>
<dbReference type="VEuPathDB" id="AmoebaDB:EHI_198620"/>
<dbReference type="VEuPathDB" id="AmoebaDB:KM1_081510"/>
<dbReference type="VEuPathDB" id="AmoebaDB:KM1_309960"/>
<dbReference type="eggNOG" id="ENOG502QW6Z">
    <property type="taxonomic scope" value="Eukaryota"/>
</dbReference>
<dbReference type="HOGENOM" id="CLU_275663_0_0_1"/>
<dbReference type="InParanoid" id="C4LWQ8"/>
<dbReference type="OrthoDB" id="10248819at2759"/>
<dbReference type="BRENDA" id="4.1.1.38">
    <property type="organism ID" value="2080"/>
</dbReference>
<dbReference type="Proteomes" id="UP000001926">
    <property type="component" value="Partially assembled WGS sequence"/>
</dbReference>
<dbReference type="GO" id="GO:0005829">
    <property type="term" value="C:cytosol"/>
    <property type="evidence" value="ECO:0000250"/>
    <property type="project" value="UniProtKB"/>
</dbReference>
<dbReference type="GO" id="GO:0030585">
    <property type="term" value="F:phosphoenolpyruvate carboxykinase (diphosphate) activity"/>
    <property type="evidence" value="ECO:0000250"/>
    <property type="project" value="UniProtKB"/>
</dbReference>
<dbReference type="GO" id="GO:0070208">
    <property type="term" value="P:protein heterotrimerization"/>
    <property type="evidence" value="ECO:0000314"/>
    <property type="project" value="UniProtKB"/>
</dbReference>